<gene>
    <name evidence="1" type="primary">purQ</name>
    <name type="ordered locus">SPO1890</name>
</gene>
<protein>
    <recommendedName>
        <fullName evidence="1">Phosphoribosylformylglycinamidine synthase subunit PurQ</fullName>
        <shortName evidence="1">FGAM synthase</shortName>
        <ecNumber evidence="1">6.3.5.3</ecNumber>
    </recommendedName>
    <alternativeName>
        <fullName evidence="1">Formylglycinamide ribonucleotide amidotransferase subunit I</fullName>
        <shortName evidence="1">FGAR amidotransferase I</shortName>
        <shortName evidence="1">FGAR-AT I</shortName>
    </alternativeName>
    <alternativeName>
        <fullName evidence="1">Glutaminase PurQ</fullName>
        <ecNumber evidence="1">3.5.1.2</ecNumber>
    </alternativeName>
    <alternativeName>
        <fullName evidence="1">Phosphoribosylformylglycinamidine synthase subunit I</fullName>
    </alternativeName>
</protein>
<comment type="function">
    <text evidence="1">Part of the phosphoribosylformylglycinamidine synthase complex involved in the purines biosynthetic pathway. Catalyzes the ATP-dependent conversion of formylglycinamide ribonucleotide (FGAR) and glutamine to yield formylglycinamidine ribonucleotide (FGAM) and glutamate. The FGAM synthase complex is composed of three subunits. PurQ produces an ammonia molecule by converting glutamine to glutamate. PurL transfers the ammonia molecule to FGAR to form FGAM in an ATP-dependent manner. PurS interacts with PurQ and PurL and is thought to assist in the transfer of the ammonia molecule from PurQ to PurL.</text>
</comment>
<comment type="catalytic activity">
    <reaction evidence="1">
        <text>N(2)-formyl-N(1)-(5-phospho-beta-D-ribosyl)glycinamide + L-glutamine + ATP + H2O = 2-formamido-N(1)-(5-O-phospho-beta-D-ribosyl)acetamidine + L-glutamate + ADP + phosphate + H(+)</text>
        <dbReference type="Rhea" id="RHEA:17129"/>
        <dbReference type="ChEBI" id="CHEBI:15377"/>
        <dbReference type="ChEBI" id="CHEBI:15378"/>
        <dbReference type="ChEBI" id="CHEBI:29985"/>
        <dbReference type="ChEBI" id="CHEBI:30616"/>
        <dbReference type="ChEBI" id="CHEBI:43474"/>
        <dbReference type="ChEBI" id="CHEBI:58359"/>
        <dbReference type="ChEBI" id="CHEBI:147286"/>
        <dbReference type="ChEBI" id="CHEBI:147287"/>
        <dbReference type="ChEBI" id="CHEBI:456216"/>
        <dbReference type="EC" id="6.3.5.3"/>
    </reaction>
</comment>
<comment type="catalytic activity">
    <reaction evidence="1">
        <text>L-glutamine + H2O = L-glutamate + NH4(+)</text>
        <dbReference type="Rhea" id="RHEA:15889"/>
        <dbReference type="ChEBI" id="CHEBI:15377"/>
        <dbReference type="ChEBI" id="CHEBI:28938"/>
        <dbReference type="ChEBI" id="CHEBI:29985"/>
        <dbReference type="ChEBI" id="CHEBI:58359"/>
        <dbReference type="EC" id="3.5.1.2"/>
    </reaction>
</comment>
<comment type="pathway">
    <text evidence="1">Purine metabolism; IMP biosynthesis via de novo pathway; 5-amino-1-(5-phospho-D-ribosyl)imidazole from N(2)-formyl-N(1)-(5-phospho-D-ribosyl)glycinamide: step 1/2.</text>
</comment>
<comment type="subunit">
    <text evidence="1">Part of the FGAM synthase complex composed of 1 PurL, 1 PurQ and 2 PurS subunits.</text>
</comment>
<comment type="subcellular location">
    <subcellularLocation>
        <location evidence="1">Cytoplasm</location>
    </subcellularLocation>
</comment>
<feature type="chain" id="PRO_0000100582" description="Phosphoribosylformylglycinamidine synthase subunit PurQ">
    <location>
        <begin position="1"/>
        <end position="222"/>
    </location>
</feature>
<feature type="domain" description="Glutamine amidotransferase type-1" evidence="1">
    <location>
        <begin position="3"/>
        <end position="222"/>
    </location>
</feature>
<feature type="active site" description="Nucleophile" evidence="1">
    <location>
        <position position="86"/>
    </location>
</feature>
<feature type="active site" evidence="1">
    <location>
        <position position="194"/>
    </location>
</feature>
<feature type="active site" evidence="1">
    <location>
        <position position="196"/>
    </location>
</feature>
<accession>Q5LS78</accession>
<dbReference type="EC" id="6.3.5.3" evidence="1"/>
<dbReference type="EC" id="3.5.1.2" evidence="1"/>
<dbReference type="EMBL" id="CP000031">
    <property type="protein sequence ID" value="AAV95169.1"/>
    <property type="molecule type" value="Genomic_DNA"/>
</dbReference>
<dbReference type="RefSeq" id="WP_011047623.1">
    <property type="nucleotide sequence ID" value="NC_003911.12"/>
</dbReference>
<dbReference type="SMR" id="Q5LS78"/>
<dbReference type="STRING" id="246200.SPO1890"/>
<dbReference type="MEROPS" id="C56.972"/>
<dbReference type="PaxDb" id="246200-SPO1890"/>
<dbReference type="KEGG" id="sil:SPO1890"/>
<dbReference type="eggNOG" id="COG0047">
    <property type="taxonomic scope" value="Bacteria"/>
</dbReference>
<dbReference type="HOGENOM" id="CLU_001031_3_1_5"/>
<dbReference type="OrthoDB" id="9804441at2"/>
<dbReference type="UniPathway" id="UPA00074">
    <property type="reaction ID" value="UER00128"/>
</dbReference>
<dbReference type="Proteomes" id="UP000001023">
    <property type="component" value="Chromosome"/>
</dbReference>
<dbReference type="GO" id="GO:0005737">
    <property type="term" value="C:cytoplasm"/>
    <property type="evidence" value="ECO:0007669"/>
    <property type="project" value="UniProtKB-SubCell"/>
</dbReference>
<dbReference type="GO" id="GO:0005524">
    <property type="term" value="F:ATP binding"/>
    <property type="evidence" value="ECO:0007669"/>
    <property type="project" value="UniProtKB-KW"/>
</dbReference>
<dbReference type="GO" id="GO:0004359">
    <property type="term" value="F:glutaminase activity"/>
    <property type="evidence" value="ECO:0007669"/>
    <property type="project" value="UniProtKB-EC"/>
</dbReference>
<dbReference type="GO" id="GO:0004642">
    <property type="term" value="F:phosphoribosylformylglycinamidine synthase activity"/>
    <property type="evidence" value="ECO:0007669"/>
    <property type="project" value="UniProtKB-UniRule"/>
</dbReference>
<dbReference type="GO" id="GO:0006189">
    <property type="term" value="P:'de novo' IMP biosynthetic process"/>
    <property type="evidence" value="ECO:0007669"/>
    <property type="project" value="UniProtKB-UniRule"/>
</dbReference>
<dbReference type="CDD" id="cd01740">
    <property type="entry name" value="GATase1_FGAR_AT"/>
    <property type="match status" value="1"/>
</dbReference>
<dbReference type="Gene3D" id="3.40.50.880">
    <property type="match status" value="1"/>
</dbReference>
<dbReference type="HAMAP" id="MF_00421">
    <property type="entry name" value="PurQ"/>
    <property type="match status" value="1"/>
</dbReference>
<dbReference type="InterPro" id="IPR029062">
    <property type="entry name" value="Class_I_gatase-like"/>
</dbReference>
<dbReference type="InterPro" id="IPR010075">
    <property type="entry name" value="PRibForGlyAmidine_synth_PurQ"/>
</dbReference>
<dbReference type="NCBIfam" id="TIGR01737">
    <property type="entry name" value="FGAM_synth_I"/>
    <property type="match status" value="1"/>
</dbReference>
<dbReference type="NCBIfam" id="NF002957">
    <property type="entry name" value="PRK03619.1"/>
    <property type="match status" value="1"/>
</dbReference>
<dbReference type="PANTHER" id="PTHR47552">
    <property type="entry name" value="PHOSPHORIBOSYLFORMYLGLYCINAMIDINE SYNTHASE SUBUNIT PURQ"/>
    <property type="match status" value="1"/>
</dbReference>
<dbReference type="PANTHER" id="PTHR47552:SF1">
    <property type="entry name" value="PHOSPHORIBOSYLFORMYLGLYCINAMIDINE SYNTHASE SUBUNIT PURQ"/>
    <property type="match status" value="1"/>
</dbReference>
<dbReference type="Pfam" id="PF13507">
    <property type="entry name" value="GATase_5"/>
    <property type="match status" value="1"/>
</dbReference>
<dbReference type="PIRSF" id="PIRSF001586">
    <property type="entry name" value="FGAM_synth_I"/>
    <property type="match status" value="1"/>
</dbReference>
<dbReference type="SMART" id="SM01211">
    <property type="entry name" value="GATase_5"/>
    <property type="match status" value="1"/>
</dbReference>
<dbReference type="SUPFAM" id="SSF52317">
    <property type="entry name" value="Class I glutamine amidotransferase-like"/>
    <property type="match status" value="1"/>
</dbReference>
<dbReference type="PROSITE" id="PS51273">
    <property type="entry name" value="GATASE_TYPE_1"/>
    <property type="match status" value="1"/>
</dbReference>
<proteinExistence type="inferred from homology"/>
<organism>
    <name type="scientific">Ruegeria pomeroyi (strain ATCC 700808 / DSM 15171 / DSS-3)</name>
    <name type="common">Silicibacter pomeroyi</name>
    <dbReference type="NCBI Taxonomy" id="246200"/>
    <lineage>
        <taxon>Bacteria</taxon>
        <taxon>Pseudomonadati</taxon>
        <taxon>Pseudomonadota</taxon>
        <taxon>Alphaproteobacteria</taxon>
        <taxon>Rhodobacterales</taxon>
        <taxon>Roseobacteraceae</taxon>
        <taxon>Ruegeria</taxon>
    </lineage>
</organism>
<evidence type="ECO:0000255" key="1">
    <source>
        <dbReference type="HAMAP-Rule" id="MF_00421"/>
    </source>
</evidence>
<reference key="1">
    <citation type="journal article" date="2004" name="Nature">
        <title>Genome sequence of Silicibacter pomeroyi reveals adaptations to the marine environment.</title>
        <authorList>
            <person name="Moran M.A."/>
            <person name="Buchan A."/>
            <person name="Gonzalez J.M."/>
            <person name="Heidelberg J.F."/>
            <person name="Whitman W.B."/>
            <person name="Kiene R.P."/>
            <person name="Henriksen J.R."/>
            <person name="King G.M."/>
            <person name="Belas R."/>
            <person name="Fuqua C."/>
            <person name="Brinkac L.M."/>
            <person name="Lewis M."/>
            <person name="Johri S."/>
            <person name="Weaver B."/>
            <person name="Pai G."/>
            <person name="Eisen J.A."/>
            <person name="Rahe E."/>
            <person name="Sheldon W.M."/>
            <person name="Ye W."/>
            <person name="Miller T.R."/>
            <person name="Carlton J."/>
            <person name="Rasko D.A."/>
            <person name="Paulsen I.T."/>
            <person name="Ren Q."/>
            <person name="Daugherty S.C."/>
            <person name="DeBoy R.T."/>
            <person name="Dodson R.J."/>
            <person name="Durkin A.S."/>
            <person name="Madupu R."/>
            <person name="Nelson W.C."/>
            <person name="Sullivan S.A."/>
            <person name="Rosovitz M.J."/>
            <person name="Haft D.H."/>
            <person name="Selengut J."/>
            <person name="Ward N."/>
        </authorList>
    </citation>
    <scope>NUCLEOTIDE SEQUENCE [LARGE SCALE GENOMIC DNA]</scope>
    <source>
        <strain>ATCC 700808 / DSM 15171 / DSS-3</strain>
    </source>
</reference>
<reference key="2">
    <citation type="journal article" date="2014" name="Stand. Genomic Sci.">
        <title>An updated genome annotation for the model marine bacterium Ruegeria pomeroyi DSS-3.</title>
        <authorList>
            <person name="Rivers A.R."/>
            <person name="Smith C.B."/>
            <person name="Moran M.A."/>
        </authorList>
    </citation>
    <scope>GENOME REANNOTATION</scope>
    <source>
        <strain>ATCC 700808 / DSM 15171 / DSS-3</strain>
    </source>
</reference>
<keyword id="KW-0067">ATP-binding</keyword>
<keyword id="KW-0963">Cytoplasm</keyword>
<keyword id="KW-0315">Glutamine amidotransferase</keyword>
<keyword id="KW-0378">Hydrolase</keyword>
<keyword id="KW-0436">Ligase</keyword>
<keyword id="KW-0547">Nucleotide-binding</keyword>
<keyword id="KW-0658">Purine biosynthesis</keyword>
<keyword id="KW-1185">Reference proteome</keyword>
<sequence>MRAAVVVFPGSNCDRDLAVAFEQAGFDVSMVWHKDADLPQGIDIVGIPGGFSYGDYLRCGAIAAQSPICKAVVAHTARGGYALGVCNGFQVLTETGILPGALLRNAGLKYICKTVGLKVETSNSVFTEGYNAGDVIGIPIAHHDGNYYADDETLAALKAEDRIAFTYTDNPNGARDDIAGILSANRRVLGMMPHPERAADAGHGGTDGVALFRALAGALTPA</sequence>
<name>PURQ_RUEPO</name>